<organism>
    <name type="scientific">Teredinibacter turnerae (strain ATCC 39867 / T7901)</name>
    <dbReference type="NCBI Taxonomy" id="377629"/>
    <lineage>
        <taxon>Bacteria</taxon>
        <taxon>Pseudomonadati</taxon>
        <taxon>Pseudomonadota</taxon>
        <taxon>Gammaproteobacteria</taxon>
        <taxon>Cellvibrionales</taxon>
        <taxon>Cellvibrionaceae</taxon>
        <taxon>Teredinibacter</taxon>
    </lineage>
</organism>
<comment type="function">
    <text evidence="1">Necessary for normal cell division and for the maintenance of normal septation.</text>
</comment>
<comment type="cofactor">
    <cofactor evidence="1">
        <name>Mg(2+)</name>
        <dbReference type="ChEBI" id="CHEBI:18420"/>
    </cofactor>
</comment>
<comment type="similarity">
    <text evidence="1">Belongs to the TRAFAC class TrmE-Era-EngA-EngB-Septin-like GTPase superfamily. EngB GTPase family.</text>
</comment>
<feature type="chain" id="PRO_1000205139" description="Probable GTP-binding protein EngB">
    <location>
        <begin position="1"/>
        <end position="214"/>
    </location>
</feature>
<feature type="domain" description="EngB-type G" evidence="1">
    <location>
        <begin position="25"/>
        <end position="203"/>
    </location>
</feature>
<feature type="binding site" evidence="1">
    <location>
        <begin position="33"/>
        <end position="40"/>
    </location>
    <ligand>
        <name>GTP</name>
        <dbReference type="ChEBI" id="CHEBI:37565"/>
    </ligand>
</feature>
<feature type="binding site" evidence="1">
    <location>
        <position position="40"/>
    </location>
    <ligand>
        <name>Mg(2+)</name>
        <dbReference type="ChEBI" id="CHEBI:18420"/>
    </ligand>
</feature>
<feature type="binding site" evidence="1">
    <location>
        <begin position="60"/>
        <end position="64"/>
    </location>
    <ligand>
        <name>GTP</name>
        <dbReference type="ChEBI" id="CHEBI:37565"/>
    </ligand>
</feature>
<feature type="binding site" evidence="1">
    <location>
        <position position="62"/>
    </location>
    <ligand>
        <name>Mg(2+)</name>
        <dbReference type="ChEBI" id="CHEBI:18420"/>
    </ligand>
</feature>
<feature type="binding site" evidence="1">
    <location>
        <begin position="80"/>
        <end position="83"/>
    </location>
    <ligand>
        <name>GTP</name>
        <dbReference type="ChEBI" id="CHEBI:37565"/>
    </ligand>
</feature>
<feature type="binding site" evidence="1">
    <location>
        <begin position="147"/>
        <end position="150"/>
    </location>
    <ligand>
        <name>GTP</name>
        <dbReference type="ChEBI" id="CHEBI:37565"/>
    </ligand>
</feature>
<feature type="binding site" evidence="1">
    <location>
        <begin position="182"/>
        <end position="184"/>
    </location>
    <ligand>
        <name>GTP</name>
        <dbReference type="ChEBI" id="CHEBI:37565"/>
    </ligand>
</feature>
<evidence type="ECO:0000255" key="1">
    <source>
        <dbReference type="HAMAP-Rule" id="MF_00321"/>
    </source>
</evidence>
<sequence>MTEINFRNAQFLISAPSLRECPAEEGAEVAFAGRSNAGKSSAINCLTNNGKLARTSKTPGRTQLINFFSLGQGAQQRLVDLPGYGYAKVPLATKREWQAHLSEYLYKRKCLRGLVLLMDIRHPMQEFDTMMLNWAVDANMPVHLLLTKSDKLKRGAANNTLLQVNRSLKESGVQDLVSAQIFSSLKNVGVQQLEQVITGWLNLPAGEDEASVKN</sequence>
<dbReference type="EMBL" id="CP001614">
    <property type="protein sequence ID" value="ACR11820.1"/>
    <property type="molecule type" value="Genomic_DNA"/>
</dbReference>
<dbReference type="RefSeq" id="WP_015817931.1">
    <property type="nucleotide sequence ID" value="NC_012997.1"/>
</dbReference>
<dbReference type="SMR" id="C5BJZ8"/>
<dbReference type="STRING" id="377629.TERTU_4644"/>
<dbReference type="KEGG" id="ttu:TERTU_4644"/>
<dbReference type="eggNOG" id="COG0218">
    <property type="taxonomic scope" value="Bacteria"/>
</dbReference>
<dbReference type="HOGENOM" id="CLU_033732_1_0_6"/>
<dbReference type="OrthoDB" id="9804921at2"/>
<dbReference type="Proteomes" id="UP000009080">
    <property type="component" value="Chromosome"/>
</dbReference>
<dbReference type="GO" id="GO:0005829">
    <property type="term" value="C:cytosol"/>
    <property type="evidence" value="ECO:0007669"/>
    <property type="project" value="TreeGrafter"/>
</dbReference>
<dbReference type="GO" id="GO:0005525">
    <property type="term" value="F:GTP binding"/>
    <property type="evidence" value="ECO:0007669"/>
    <property type="project" value="UniProtKB-UniRule"/>
</dbReference>
<dbReference type="GO" id="GO:0046872">
    <property type="term" value="F:metal ion binding"/>
    <property type="evidence" value="ECO:0007669"/>
    <property type="project" value="UniProtKB-KW"/>
</dbReference>
<dbReference type="GO" id="GO:0000917">
    <property type="term" value="P:division septum assembly"/>
    <property type="evidence" value="ECO:0007669"/>
    <property type="project" value="UniProtKB-KW"/>
</dbReference>
<dbReference type="CDD" id="cd01876">
    <property type="entry name" value="YihA_EngB"/>
    <property type="match status" value="1"/>
</dbReference>
<dbReference type="FunFam" id="3.40.50.300:FF:000098">
    <property type="entry name" value="Probable GTP-binding protein EngB"/>
    <property type="match status" value="1"/>
</dbReference>
<dbReference type="Gene3D" id="3.40.50.300">
    <property type="entry name" value="P-loop containing nucleotide triphosphate hydrolases"/>
    <property type="match status" value="1"/>
</dbReference>
<dbReference type="HAMAP" id="MF_00321">
    <property type="entry name" value="GTPase_EngB"/>
    <property type="match status" value="1"/>
</dbReference>
<dbReference type="InterPro" id="IPR030393">
    <property type="entry name" value="G_ENGB_dom"/>
</dbReference>
<dbReference type="InterPro" id="IPR006073">
    <property type="entry name" value="GTP-bd"/>
</dbReference>
<dbReference type="InterPro" id="IPR019987">
    <property type="entry name" value="GTP-bd_ribosome_bio_YsxC"/>
</dbReference>
<dbReference type="InterPro" id="IPR027417">
    <property type="entry name" value="P-loop_NTPase"/>
</dbReference>
<dbReference type="NCBIfam" id="TIGR03598">
    <property type="entry name" value="GTPase_YsxC"/>
    <property type="match status" value="1"/>
</dbReference>
<dbReference type="PANTHER" id="PTHR11649:SF13">
    <property type="entry name" value="ENGB-TYPE G DOMAIN-CONTAINING PROTEIN"/>
    <property type="match status" value="1"/>
</dbReference>
<dbReference type="PANTHER" id="PTHR11649">
    <property type="entry name" value="MSS1/TRME-RELATED GTP-BINDING PROTEIN"/>
    <property type="match status" value="1"/>
</dbReference>
<dbReference type="Pfam" id="PF01926">
    <property type="entry name" value="MMR_HSR1"/>
    <property type="match status" value="1"/>
</dbReference>
<dbReference type="SUPFAM" id="SSF52540">
    <property type="entry name" value="P-loop containing nucleoside triphosphate hydrolases"/>
    <property type="match status" value="1"/>
</dbReference>
<dbReference type="PROSITE" id="PS51706">
    <property type="entry name" value="G_ENGB"/>
    <property type="match status" value="1"/>
</dbReference>
<protein>
    <recommendedName>
        <fullName evidence="1">Probable GTP-binding protein EngB</fullName>
    </recommendedName>
</protein>
<keyword id="KW-0131">Cell cycle</keyword>
<keyword id="KW-0132">Cell division</keyword>
<keyword id="KW-0342">GTP-binding</keyword>
<keyword id="KW-0460">Magnesium</keyword>
<keyword id="KW-0479">Metal-binding</keyword>
<keyword id="KW-0547">Nucleotide-binding</keyword>
<keyword id="KW-1185">Reference proteome</keyword>
<keyword id="KW-0717">Septation</keyword>
<gene>
    <name evidence="1" type="primary">engB</name>
    <name type="ordered locus">TERTU_4644</name>
</gene>
<accession>C5BJZ8</accession>
<name>ENGB_TERTT</name>
<reference key="1">
    <citation type="journal article" date="2009" name="PLoS ONE">
        <title>The complete genome of Teredinibacter turnerae T7901: an intracellular endosymbiont of marine wood-boring bivalves (shipworms).</title>
        <authorList>
            <person name="Yang J.C."/>
            <person name="Madupu R."/>
            <person name="Durkin A.S."/>
            <person name="Ekborg N.A."/>
            <person name="Pedamallu C.S."/>
            <person name="Hostetler J.B."/>
            <person name="Radune D."/>
            <person name="Toms B.S."/>
            <person name="Henrissat B."/>
            <person name="Coutinho P.M."/>
            <person name="Schwarz S."/>
            <person name="Field L."/>
            <person name="Trindade-Silva A.E."/>
            <person name="Soares C.A.G."/>
            <person name="Elshahawi S."/>
            <person name="Hanora A."/>
            <person name="Schmidt E.W."/>
            <person name="Haygood M.G."/>
            <person name="Posfai J."/>
            <person name="Benner J."/>
            <person name="Madinger C."/>
            <person name="Nove J."/>
            <person name="Anton B."/>
            <person name="Chaudhary K."/>
            <person name="Foster J."/>
            <person name="Holman A."/>
            <person name="Kumar S."/>
            <person name="Lessard P.A."/>
            <person name="Luyten Y.A."/>
            <person name="Slatko B."/>
            <person name="Wood N."/>
            <person name="Wu B."/>
            <person name="Teplitski M."/>
            <person name="Mougous J.D."/>
            <person name="Ward N."/>
            <person name="Eisen J.A."/>
            <person name="Badger J.H."/>
            <person name="Distel D.L."/>
        </authorList>
    </citation>
    <scope>NUCLEOTIDE SEQUENCE [LARGE SCALE GENOMIC DNA]</scope>
    <source>
        <strain>ATCC 39867 / T7901</strain>
    </source>
</reference>
<proteinExistence type="inferred from homology"/>